<feature type="chain" id="PRO_1000123202" description="Glycerol-3-phosphate dehydrogenase [NAD(P)+]">
    <location>
        <begin position="1"/>
        <end position="325"/>
    </location>
</feature>
<feature type="active site" description="Proton acceptor" evidence="1">
    <location>
        <position position="186"/>
    </location>
</feature>
<feature type="binding site" evidence="1">
    <location>
        <position position="11"/>
    </location>
    <ligand>
        <name>NADPH</name>
        <dbReference type="ChEBI" id="CHEBI:57783"/>
    </ligand>
</feature>
<feature type="binding site" evidence="1">
    <location>
        <position position="30"/>
    </location>
    <ligand>
        <name>NADPH</name>
        <dbReference type="ChEBI" id="CHEBI:57783"/>
    </ligand>
</feature>
<feature type="binding site" evidence="1">
    <location>
        <position position="103"/>
    </location>
    <ligand>
        <name>NADPH</name>
        <dbReference type="ChEBI" id="CHEBI:57783"/>
    </ligand>
</feature>
<feature type="binding site" evidence="1">
    <location>
        <position position="103"/>
    </location>
    <ligand>
        <name>sn-glycerol 3-phosphate</name>
        <dbReference type="ChEBI" id="CHEBI:57597"/>
    </ligand>
</feature>
<feature type="binding site" evidence="1">
    <location>
        <position position="131"/>
    </location>
    <ligand>
        <name>sn-glycerol 3-phosphate</name>
        <dbReference type="ChEBI" id="CHEBI:57597"/>
    </ligand>
</feature>
<feature type="binding site" evidence="1">
    <location>
        <position position="133"/>
    </location>
    <ligand>
        <name>sn-glycerol 3-phosphate</name>
        <dbReference type="ChEBI" id="CHEBI:57597"/>
    </ligand>
</feature>
<feature type="binding site" evidence="1">
    <location>
        <position position="135"/>
    </location>
    <ligand>
        <name>NADPH</name>
        <dbReference type="ChEBI" id="CHEBI:57783"/>
    </ligand>
</feature>
<feature type="binding site" evidence="1">
    <location>
        <position position="186"/>
    </location>
    <ligand>
        <name>sn-glycerol 3-phosphate</name>
        <dbReference type="ChEBI" id="CHEBI:57597"/>
    </ligand>
</feature>
<feature type="binding site" evidence="1">
    <location>
        <position position="242"/>
    </location>
    <ligand>
        <name>sn-glycerol 3-phosphate</name>
        <dbReference type="ChEBI" id="CHEBI:57597"/>
    </ligand>
</feature>
<feature type="binding site" evidence="1">
    <location>
        <position position="252"/>
    </location>
    <ligand>
        <name>sn-glycerol 3-phosphate</name>
        <dbReference type="ChEBI" id="CHEBI:57597"/>
    </ligand>
</feature>
<feature type="binding site" evidence="1">
    <location>
        <position position="253"/>
    </location>
    <ligand>
        <name>NADPH</name>
        <dbReference type="ChEBI" id="CHEBI:57783"/>
    </ligand>
</feature>
<feature type="binding site" evidence="1">
    <location>
        <position position="253"/>
    </location>
    <ligand>
        <name>sn-glycerol 3-phosphate</name>
        <dbReference type="ChEBI" id="CHEBI:57597"/>
    </ligand>
</feature>
<feature type="binding site" evidence="1">
    <location>
        <position position="254"/>
    </location>
    <ligand>
        <name>sn-glycerol 3-phosphate</name>
        <dbReference type="ChEBI" id="CHEBI:57597"/>
    </ligand>
</feature>
<feature type="binding site" evidence="1">
    <location>
        <position position="279"/>
    </location>
    <ligand>
        <name>NADPH</name>
        <dbReference type="ChEBI" id="CHEBI:57783"/>
    </ligand>
</feature>
<feature type="binding site" evidence="1">
    <location>
        <position position="281"/>
    </location>
    <ligand>
        <name>NADPH</name>
        <dbReference type="ChEBI" id="CHEBI:57783"/>
    </ligand>
</feature>
<accession>B3CLC5</accession>
<evidence type="ECO:0000255" key="1">
    <source>
        <dbReference type="HAMAP-Rule" id="MF_00394"/>
    </source>
</evidence>
<keyword id="KW-0963">Cytoplasm</keyword>
<keyword id="KW-0444">Lipid biosynthesis</keyword>
<keyword id="KW-0443">Lipid metabolism</keyword>
<keyword id="KW-0520">NAD</keyword>
<keyword id="KW-0521">NADP</keyword>
<keyword id="KW-0547">Nucleotide-binding</keyword>
<keyword id="KW-0560">Oxidoreductase</keyword>
<keyword id="KW-0594">Phospholipid biosynthesis</keyword>
<keyword id="KW-1208">Phospholipid metabolism</keyword>
<name>GPDA_WOLPP</name>
<proteinExistence type="inferred from homology"/>
<organism>
    <name type="scientific">Wolbachia pipientis subsp. Culex pipiens (strain wPip)</name>
    <dbReference type="NCBI Taxonomy" id="570417"/>
    <lineage>
        <taxon>Bacteria</taxon>
        <taxon>Pseudomonadati</taxon>
        <taxon>Pseudomonadota</taxon>
        <taxon>Alphaproteobacteria</taxon>
        <taxon>Rickettsiales</taxon>
        <taxon>Anaplasmataceae</taxon>
        <taxon>Wolbachieae</taxon>
        <taxon>Wolbachia</taxon>
    </lineage>
</organism>
<sequence>MVISVLGAGAWGTAIAISLSGKKNVILWTRNKAIFESIKEKRESDKLPDCPISDNVSVKLAIEDAVNASVIILAVPTQSLREICHQLNDCNLKKNVAIILACKGIEKSTLKLPSEVVNEVLPNNPLAVFSGPSFAIEVARKLPYSMVLACQNEVLGLKLVSELQQENIKLYLSSDVIGIQVCAALKNVFAIACGVVLGRFGFNAHAALITKSMSEIKALYSAKVGDGNVDINTLLGPACLGDLVVTCTSLNSRNLSFGSKVANSNGSSAQQILSEGKSVIEGFNTAKSAFDLAEKLKIKMPICEAIYRLLYENTSIEDTISVLVN</sequence>
<gene>
    <name evidence="1" type="primary">gpsA</name>
    <name type="ordered locus">WP0584</name>
</gene>
<comment type="function">
    <text evidence="1">Catalyzes the reduction of the glycolytic intermediate dihydroxyacetone phosphate (DHAP) to sn-glycerol 3-phosphate (G3P), the key precursor for phospholipid synthesis.</text>
</comment>
<comment type="catalytic activity">
    <reaction evidence="1">
        <text>sn-glycerol 3-phosphate + NAD(+) = dihydroxyacetone phosphate + NADH + H(+)</text>
        <dbReference type="Rhea" id="RHEA:11092"/>
        <dbReference type="ChEBI" id="CHEBI:15378"/>
        <dbReference type="ChEBI" id="CHEBI:57540"/>
        <dbReference type="ChEBI" id="CHEBI:57597"/>
        <dbReference type="ChEBI" id="CHEBI:57642"/>
        <dbReference type="ChEBI" id="CHEBI:57945"/>
        <dbReference type="EC" id="1.1.1.94"/>
    </reaction>
    <physiologicalReaction direction="right-to-left" evidence="1">
        <dbReference type="Rhea" id="RHEA:11094"/>
    </physiologicalReaction>
</comment>
<comment type="catalytic activity">
    <reaction evidence="1">
        <text>sn-glycerol 3-phosphate + NADP(+) = dihydroxyacetone phosphate + NADPH + H(+)</text>
        <dbReference type="Rhea" id="RHEA:11096"/>
        <dbReference type="ChEBI" id="CHEBI:15378"/>
        <dbReference type="ChEBI" id="CHEBI:57597"/>
        <dbReference type="ChEBI" id="CHEBI:57642"/>
        <dbReference type="ChEBI" id="CHEBI:57783"/>
        <dbReference type="ChEBI" id="CHEBI:58349"/>
        <dbReference type="EC" id="1.1.1.94"/>
    </reaction>
    <physiologicalReaction direction="right-to-left" evidence="1">
        <dbReference type="Rhea" id="RHEA:11098"/>
    </physiologicalReaction>
</comment>
<comment type="pathway">
    <text evidence="1">Membrane lipid metabolism; glycerophospholipid metabolism.</text>
</comment>
<comment type="subcellular location">
    <subcellularLocation>
        <location evidence="1">Cytoplasm</location>
    </subcellularLocation>
</comment>
<comment type="similarity">
    <text evidence="1">Belongs to the NAD-dependent glycerol-3-phosphate dehydrogenase family.</text>
</comment>
<reference key="1">
    <citation type="journal article" date="2008" name="Mol. Biol. Evol.">
        <title>Genome evolution of Wolbachia strain wPip from the Culex pipiens group.</title>
        <authorList>
            <person name="Klasson L."/>
            <person name="Walker T."/>
            <person name="Sebaihia M."/>
            <person name="Sanders M.J."/>
            <person name="Quail M.A."/>
            <person name="Lord A."/>
            <person name="Sanders S."/>
            <person name="Earl J."/>
            <person name="O'Neill S.L."/>
            <person name="Thomson N."/>
            <person name="Sinkins S.P."/>
            <person name="Parkhill J."/>
        </authorList>
    </citation>
    <scope>NUCLEOTIDE SEQUENCE [LARGE SCALE GENOMIC DNA]</scope>
    <source>
        <strain>wPip</strain>
    </source>
</reference>
<dbReference type="EC" id="1.1.1.94" evidence="1"/>
<dbReference type="EMBL" id="AM999887">
    <property type="protein sequence ID" value="CAQ54692.1"/>
    <property type="molecule type" value="Genomic_DNA"/>
</dbReference>
<dbReference type="RefSeq" id="WP_007302013.1">
    <property type="nucleotide sequence ID" value="NC_010981.1"/>
</dbReference>
<dbReference type="SMR" id="B3CLC5"/>
<dbReference type="KEGG" id="wpi:WP0584"/>
<dbReference type="eggNOG" id="COG0240">
    <property type="taxonomic scope" value="Bacteria"/>
</dbReference>
<dbReference type="HOGENOM" id="CLU_033449_0_0_5"/>
<dbReference type="UniPathway" id="UPA00940"/>
<dbReference type="Proteomes" id="UP000008814">
    <property type="component" value="Chromosome"/>
</dbReference>
<dbReference type="GO" id="GO:0005829">
    <property type="term" value="C:cytosol"/>
    <property type="evidence" value="ECO:0007669"/>
    <property type="project" value="TreeGrafter"/>
</dbReference>
<dbReference type="GO" id="GO:0047952">
    <property type="term" value="F:glycerol-3-phosphate dehydrogenase [NAD(P)+] activity"/>
    <property type="evidence" value="ECO:0007669"/>
    <property type="project" value="UniProtKB-UniRule"/>
</dbReference>
<dbReference type="GO" id="GO:0051287">
    <property type="term" value="F:NAD binding"/>
    <property type="evidence" value="ECO:0007669"/>
    <property type="project" value="InterPro"/>
</dbReference>
<dbReference type="GO" id="GO:0005975">
    <property type="term" value="P:carbohydrate metabolic process"/>
    <property type="evidence" value="ECO:0007669"/>
    <property type="project" value="InterPro"/>
</dbReference>
<dbReference type="GO" id="GO:0046167">
    <property type="term" value="P:glycerol-3-phosphate biosynthetic process"/>
    <property type="evidence" value="ECO:0007669"/>
    <property type="project" value="UniProtKB-UniRule"/>
</dbReference>
<dbReference type="GO" id="GO:0046168">
    <property type="term" value="P:glycerol-3-phosphate catabolic process"/>
    <property type="evidence" value="ECO:0007669"/>
    <property type="project" value="InterPro"/>
</dbReference>
<dbReference type="GO" id="GO:0006650">
    <property type="term" value="P:glycerophospholipid metabolic process"/>
    <property type="evidence" value="ECO:0007669"/>
    <property type="project" value="UniProtKB-UniRule"/>
</dbReference>
<dbReference type="GO" id="GO:0008654">
    <property type="term" value="P:phospholipid biosynthetic process"/>
    <property type="evidence" value="ECO:0007669"/>
    <property type="project" value="UniProtKB-KW"/>
</dbReference>
<dbReference type="FunFam" id="3.40.50.720:FF:000019">
    <property type="entry name" value="Glycerol-3-phosphate dehydrogenase [NAD(P)+]"/>
    <property type="match status" value="1"/>
</dbReference>
<dbReference type="Gene3D" id="1.10.1040.10">
    <property type="entry name" value="N-(1-d-carboxylethyl)-l-norvaline Dehydrogenase, domain 2"/>
    <property type="match status" value="1"/>
</dbReference>
<dbReference type="Gene3D" id="3.40.50.720">
    <property type="entry name" value="NAD(P)-binding Rossmann-like Domain"/>
    <property type="match status" value="1"/>
</dbReference>
<dbReference type="HAMAP" id="MF_00394">
    <property type="entry name" value="NAD_Glyc3P_dehydrog"/>
    <property type="match status" value="1"/>
</dbReference>
<dbReference type="InterPro" id="IPR008927">
    <property type="entry name" value="6-PGluconate_DH-like_C_sf"/>
</dbReference>
<dbReference type="InterPro" id="IPR013328">
    <property type="entry name" value="6PGD_dom2"/>
</dbReference>
<dbReference type="InterPro" id="IPR006168">
    <property type="entry name" value="G3P_DH_NAD-dep"/>
</dbReference>
<dbReference type="InterPro" id="IPR006109">
    <property type="entry name" value="G3P_DH_NAD-dep_C"/>
</dbReference>
<dbReference type="InterPro" id="IPR011128">
    <property type="entry name" value="G3P_DH_NAD-dep_N"/>
</dbReference>
<dbReference type="InterPro" id="IPR036291">
    <property type="entry name" value="NAD(P)-bd_dom_sf"/>
</dbReference>
<dbReference type="NCBIfam" id="NF000940">
    <property type="entry name" value="PRK00094.1-2"/>
    <property type="match status" value="1"/>
</dbReference>
<dbReference type="NCBIfam" id="NF000942">
    <property type="entry name" value="PRK00094.1-4"/>
    <property type="match status" value="1"/>
</dbReference>
<dbReference type="NCBIfam" id="NF011213">
    <property type="entry name" value="PRK14620.1"/>
    <property type="match status" value="1"/>
</dbReference>
<dbReference type="PANTHER" id="PTHR11728">
    <property type="entry name" value="GLYCEROL-3-PHOSPHATE DEHYDROGENASE"/>
    <property type="match status" value="1"/>
</dbReference>
<dbReference type="PANTHER" id="PTHR11728:SF1">
    <property type="entry name" value="GLYCEROL-3-PHOSPHATE DEHYDROGENASE [NAD(+)] 2, CHLOROPLASTIC"/>
    <property type="match status" value="1"/>
</dbReference>
<dbReference type="Pfam" id="PF07479">
    <property type="entry name" value="NAD_Gly3P_dh_C"/>
    <property type="match status" value="1"/>
</dbReference>
<dbReference type="Pfam" id="PF01210">
    <property type="entry name" value="NAD_Gly3P_dh_N"/>
    <property type="match status" value="1"/>
</dbReference>
<dbReference type="PIRSF" id="PIRSF000114">
    <property type="entry name" value="Glycerol-3-P_dh"/>
    <property type="match status" value="1"/>
</dbReference>
<dbReference type="PRINTS" id="PR00077">
    <property type="entry name" value="GPDHDRGNASE"/>
</dbReference>
<dbReference type="SUPFAM" id="SSF48179">
    <property type="entry name" value="6-phosphogluconate dehydrogenase C-terminal domain-like"/>
    <property type="match status" value="1"/>
</dbReference>
<dbReference type="SUPFAM" id="SSF51735">
    <property type="entry name" value="NAD(P)-binding Rossmann-fold domains"/>
    <property type="match status" value="1"/>
</dbReference>
<dbReference type="PROSITE" id="PS00957">
    <property type="entry name" value="NAD_G3PDH"/>
    <property type="match status" value="1"/>
</dbReference>
<protein>
    <recommendedName>
        <fullName evidence="1">Glycerol-3-phosphate dehydrogenase [NAD(P)+]</fullName>
        <ecNumber evidence="1">1.1.1.94</ecNumber>
    </recommendedName>
    <alternativeName>
        <fullName evidence="1">NAD(P)(+)-dependent glycerol-3-phosphate dehydrogenase</fullName>
    </alternativeName>
    <alternativeName>
        <fullName evidence="1">NAD(P)H-dependent dihydroxyacetone-phosphate reductase</fullName>
    </alternativeName>
</protein>